<protein>
    <recommendedName>
        <fullName evidence="1">Ion-translocating oxidoreductase complex subunit B</fullName>
        <ecNumber evidence="1">7.-.-.-</ecNumber>
    </recommendedName>
    <alternativeName>
        <fullName evidence="1">Rnf electron transport complex subunit B</fullName>
    </alternativeName>
</protein>
<reference key="1">
    <citation type="journal article" date="2005" name="J. Bacteriol.">
        <title>Genomic sequence of an otitis media isolate of nontypeable Haemophilus influenzae: comparative study with H. influenzae serotype d, strain KW20.</title>
        <authorList>
            <person name="Harrison A."/>
            <person name="Dyer D.W."/>
            <person name="Gillaspy A."/>
            <person name="Ray W.C."/>
            <person name="Mungur R."/>
            <person name="Carson M.B."/>
            <person name="Zhong H."/>
            <person name="Gipson J."/>
            <person name="Gipson M."/>
            <person name="Johnson L.S."/>
            <person name="Lewis L."/>
            <person name="Bakaletz L.O."/>
            <person name="Munson R.S. Jr."/>
        </authorList>
    </citation>
    <scope>NUCLEOTIDE SEQUENCE [LARGE SCALE GENOMIC DNA]</scope>
    <source>
        <strain>86-028NP</strain>
    </source>
</reference>
<proteinExistence type="inferred from homology"/>
<accession>Q4QJQ7</accession>
<gene>
    <name evidence="1" type="primary">rnfB</name>
    <name type="ordered locus">NTHI1990</name>
</gene>
<keyword id="KW-0004">4Fe-4S</keyword>
<keyword id="KW-0997">Cell inner membrane</keyword>
<keyword id="KW-1003">Cell membrane</keyword>
<keyword id="KW-0249">Electron transport</keyword>
<keyword id="KW-0408">Iron</keyword>
<keyword id="KW-0411">Iron-sulfur</keyword>
<keyword id="KW-0472">Membrane</keyword>
<keyword id="KW-0479">Metal-binding</keyword>
<keyword id="KW-0677">Repeat</keyword>
<keyword id="KW-1278">Translocase</keyword>
<keyword id="KW-0813">Transport</keyword>
<feature type="chain" id="PRO_1000013646" description="Ion-translocating oxidoreductase complex subunit B">
    <location>
        <begin position="1"/>
        <end position="193"/>
    </location>
</feature>
<feature type="domain" description="4Fe-4S" evidence="1">
    <location>
        <begin position="29"/>
        <end position="87"/>
    </location>
</feature>
<feature type="domain" description="4Fe-4S ferredoxin-type 1" evidence="1">
    <location>
        <begin position="101"/>
        <end position="130"/>
    </location>
</feature>
<feature type="domain" description="4Fe-4S ferredoxin-type 2" evidence="1">
    <location>
        <begin position="131"/>
        <end position="160"/>
    </location>
</feature>
<feature type="region of interest" description="Hydrophobic" evidence="1">
    <location>
        <begin position="1"/>
        <end position="23"/>
    </location>
</feature>
<feature type="binding site" evidence="1">
    <location>
        <position position="46"/>
    </location>
    <ligand>
        <name>[4Fe-4S] cluster</name>
        <dbReference type="ChEBI" id="CHEBI:49883"/>
        <label>1</label>
    </ligand>
</feature>
<feature type="binding site" evidence="1">
    <location>
        <position position="49"/>
    </location>
    <ligand>
        <name>[4Fe-4S] cluster</name>
        <dbReference type="ChEBI" id="CHEBI:49883"/>
        <label>1</label>
    </ligand>
</feature>
<feature type="binding site" evidence="1">
    <location>
        <position position="54"/>
    </location>
    <ligand>
        <name>[4Fe-4S] cluster</name>
        <dbReference type="ChEBI" id="CHEBI:49883"/>
        <label>1</label>
    </ligand>
</feature>
<feature type="binding site" evidence="1">
    <location>
        <position position="70"/>
    </location>
    <ligand>
        <name>[4Fe-4S] cluster</name>
        <dbReference type="ChEBI" id="CHEBI:49883"/>
        <label>1</label>
    </ligand>
</feature>
<feature type="binding site" evidence="1">
    <location>
        <position position="110"/>
    </location>
    <ligand>
        <name>[4Fe-4S] cluster</name>
        <dbReference type="ChEBI" id="CHEBI:49883"/>
        <label>2</label>
    </ligand>
</feature>
<feature type="binding site" evidence="1">
    <location>
        <position position="113"/>
    </location>
    <ligand>
        <name>[4Fe-4S] cluster</name>
        <dbReference type="ChEBI" id="CHEBI:49883"/>
        <label>2</label>
    </ligand>
</feature>
<feature type="binding site" evidence="1">
    <location>
        <position position="116"/>
    </location>
    <ligand>
        <name>[4Fe-4S] cluster</name>
        <dbReference type="ChEBI" id="CHEBI:49883"/>
        <label>2</label>
    </ligand>
</feature>
<feature type="binding site" evidence="1">
    <location>
        <position position="120"/>
    </location>
    <ligand>
        <name>[4Fe-4S] cluster</name>
        <dbReference type="ChEBI" id="CHEBI:49883"/>
        <label>3</label>
    </ligand>
</feature>
<feature type="binding site" evidence="1">
    <location>
        <position position="140"/>
    </location>
    <ligand>
        <name>[4Fe-4S] cluster</name>
        <dbReference type="ChEBI" id="CHEBI:49883"/>
        <label>3</label>
    </ligand>
</feature>
<feature type="binding site" evidence="1">
    <location>
        <position position="143"/>
    </location>
    <ligand>
        <name>[4Fe-4S] cluster</name>
        <dbReference type="ChEBI" id="CHEBI:49883"/>
        <label>3</label>
    </ligand>
</feature>
<feature type="binding site" evidence="1">
    <location>
        <position position="146"/>
    </location>
    <ligand>
        <name>[4Fe-4S] cluster</name>
        <dbReference type="ChEBI" id="CHEBI:49883"/>
        <label>3</label>
    </ligand>
</feature>
<feature type="binding site" evidence="1">
    <location>
        <position position="150"/>
    </location>
    <ligand>
        <name>[4Fe-4S] cluster</name>
        <dbReference type="ChEBI" id="CHEBI:49883"/>
        <label>2</label>
    </ligand>
</feature>
<dbReference type="EC" id="7.-.-.-" evidence="1"/>
<dbReference type="EMBL" id="CP000057">
    <property type="protein sequence ID" value="AAX88740.1"/>
    <property type="molecule type" value="Genomic_DNA"/>
</dbReference>
<dbReference type="KEGG" id="hit:NTHI1990"/>
<dbReference type="HOGENOM" id="CLU_063448_2_0_6"/>
<dbReference type="Proteomes" id="UP000002525">
    <property type="component" value="Chromosome"/>
</dbReference>
<dbReference type="GO" id="GO:0005886">
    <property type="term" value="C:plasma membrane"/>
    <property type="evidence" value="ECO:0007669"/>
    <property type="project" value="UniProtKB-SubCell"/>
</dbReference>
<dbReference type="GO" id="GO:0051539">
    <property type="term" value="F:4 iron, 4 sulfur cluster binding"/>
    <property type="evidence" value="ECO:0007669"/>
    <property type="project" value="UniProtKB-UniRule"/>
</dbReference>
<dbReference type="GO" id="GO:0009055">
    <property type="term" value="F:electron transfer activity"/>
    <property type="evidence" value="ECO:0007669"/>
    <property type="project" value="InterPro"/>
</dbReference>
<dbReference type="GO" id="GO:0046872">
    <property type="term" value="F:metal ion binding"/>
    <property type="evidence" value="ECO:0007669"/>
    <property type="project" value="UniProtKB-KW"/>
</dbReference>
<dbReference type="GO" id="GO:0022900">
    <property type="term" value="P:electron transport chain"/>
    <property type="evidence" value="ECO:0007669"/>
    <property type="project" value="UniProtKB-UniRule"/>
</dbReference>
<dbReference type="FunFam" id="1.10.15.40:FF:000001">
    <property type="entry name" value="Ion-translocating oxidoreductase complex subunit B"/>
    <property type="match status" value="1"/>
</dbReference>
<dbReference type="Gene3D" id="3.30.70.20">
    <property type="match status" value="2"/>
</dbReference>
<dbReference type="Gene3D" id="1.10.15.40">
    <property type="entry name" value="Electron transport complex subunit B, putative Fe-S cluster"/>
    <property type="match status" value="1"/>
</dbReference>
<dbReference type="HAMAP" id="MF_00463">
    <property type="entry name" value="RsxB_RnfB"/>
    <property type="match status" value="1"/>
</dbReference>
<dbReference type="InterPro" id="IPR007202">
    <property type="entry name" value="4Fe-4S_dom"/>
</dbReference>
<dbReference type="InterPro" id="IPR017896">
    <property type="entry name" value="4Fe4S_Fe-S-bd"/>
</dbReference>
<dbReference type="InterPro" id="IPR017900">
    <property type="entry name" value="4Fe4S_Fe_S_CS"/>
</dbReference>
<dbReference type="InterPro" id="IPR010207">
    <property type="entry name" value="Elect_transpt_cplx_RnfB/RsxB"/>
</dbReference>
<dbReference type="InterPro" id="IPR016463">
    <property type="entry name" value="RnfB/RsxB_Proteobac"/>
</dbReference>
<dbReference type="InterPro" id="IPR050294">
    <property type="entry name" value="RnfB_subfamily"/>
</dbReference>
<dbReference type="NCBIfam" id="NF003475">
    <property type="entry name" value="PRK05113.1"/>
    <property type="match status" value="1"/>
</dbReference>
<dbReference type="NCBIfam" id="TIGR01944">
    <property type="entry name" value="rnfB"/>
    <property type="match status" value="1"/>
</dbReference>
<dbReference type="PANTHER" id="PTHR42859:SF3">
    <property type="entry name" value="ION-TRANSLOCATING OXIDOREDUCTASE COMPLEX SUBUNIT B"/>
    <property type="match status" value="1"/>
</dbReference>
<dbReference type="PANTHER" id="PTHR42859">
    <property type="entry name" value="OXIDOREDUCTASE"/>
    <property type="match status" value="1"/>
</dbReference>
<dbReference type="Pfam" id="PF14697">
    <property type="entry name" value="Fer4_21"/>
    <property type="match status" value="1"/>
</dbReference>
<dbReference type="Pfam" id="PF04060">
    <property type="entry name" value="FeS"/>
    <property type="match status" value="1"/>
</dbReference>
<dbReference type="PIRSF" id="PIRSF005784">
    <property type="entry name" value="Elect_transpt_RnfB"/>
    <property type="match status" value="1"/>
</dbReference>
<dbReference type="SUPFAM" id="SSF54862">
    <property type="entry name" value="4Fe-4S ferredoxins"/>
    <property type="match status" value="1"/>
</dbReference>
<dbReference type="PROSITE" id="PS51656">
    <property type="entry name" value="4FE4S"/>
    <property type="match status" value="1"/>
</dbReference>
<dbReference type="PROSITE" id="PS00198">
    <property type="entry name" value="4FE4S_FER_1"/>
    <property type="match status" value="2"/>
</dbReference>
<dbReference type="PROSITE" id="PS51379">
    <property type="entry name" value="4FE4S_FER_2"/>
    <property type="match status" value="2"/>
</dbReference>
<evidence type="ECO:0000255" key="1">
    <source>
        <dbReference type="HAMAP-Rule" id="MF_00463"/>
    </source>
</evidence>
<sequence length="193" mass="20762">MTFLFIVITLLALIFGAILGFASIKLKVEADPVVEKIDAILPQSQCGQCGYPGCKPYAEAICNGDEITKCIPGGQTTIVKIAEILGVDVPTMEGIEEPIEKVAFIDENMCIGCTKCIQACPVDAIIGTNKAMHTIIPDLCTGCELCVAPCPTDCILMIPVKKNIDNWDWKFDAKLVIPVMNVDGSEKKLVVGE</sequence>
<name>RNFB_HAEI8</name>
<organism>
    <name type="scientific">Haemophilus influenzae (strain 86-028NP)</name>
    <dbReference type="NCBI Taxonomy" id="281310"/>
    <lineage>
        <taxon>Bacteria</taxon>
        <taxon>Pseudomonadati</taxon>
        <taxon>Pseudomonadota</taxon>
        <taxon>Gammaproteobacteria</taxon>
        <taxon>Pasteurellales</taxon>
        <taxon>Pasteurellaceae</taxon>
        <taxon>Haemophilus</taxon>
    </lineage>
</organism>
<comment type="function">
    <text evidence="1">Part of a membrane-bound complex that couples electron transfer with translocation of ions across the membrane.</text>
</comment>
<comment type="cofactor">
    <cofactor evidence="1">
        <name>[4Fe-4S] cluster</name>
        <dbReference type="ChEBI" id="CHEBI:49883"/>
    </cofactor>
    <text evidence="1">Binds 3 [4Fe-4S] clusters.</text>
</comment>
<comment type="subunit">
    <text evidence="1">The complex is composed of six subunits: RnfA, RnfB, RnfC, RnfD, RnfE and RnfG.</text>
</comment>
<comment type="subcellular location">
    <subcellularLocation>
        <location evidence="1">Cell inner membrane</location>
    </subcellularLocation>
</comment>
<comment type="similarity">
    <text evidence="1">Belongs to the 4Fe4S bacterial-type ferredoxin family. RnfB subfamily.</text>
</comment>